<keyword id="KW-0175">Coiled coil</keyword>
<keyword id="KW-0325">Glycoprotein</keyword>
<keyword id="KW-1185">Reference proteome</keyword>
<keyword id="KW-0964">Secreted</keyword>
<keyword id="KW-0732">Signal</keyword>
<gene>
    <name evidence="11" type="primary">SG1f</name>
    <name evidence="13" type="ORF">AgaP_AGAP000610</name>
</gene>
<proteinExistence type="evidence at protein level"/>
<dbReference type="EMBL" id="AAAB01008846">
    <property type="protein sequence ID" value="EAU77228.3"/>
    <property type="molecule type" value="Genomic_DNA"/>
</dbReference>
<dbReference type="EMBL" id="AY846632">
    <property type="protein sequence ID" value="AAW31598.1"/>
    <property type="molecule type" value="Genomic_DNA"/>
</dbReference>
<dbReference type="SMR" id="F7IW82"/>
<dbReference type="PaxDb" id="7165-AGAP000610-PA"/>
<dbReference type="EnsemblMetazoa" id="AGAP000610-RA">
    <property type="protein sequence ID" value="AGAP000610-PA"/>
    <property type="gene ID" value="AGAP000610"/>
</dbReference>
<dbReference type="GeneID" id="4576032"/>
<dbReference type="KEGG" id="aga:4576032"/>
<dbReference type="CTD" id="4576032"/>
<dbReference type="VEuPathDB" id="VectorBase:AGAMI1_008193"/>
<dbReference type="VEuPathDB" id="VectorBase:AGAP000610"/>
<dbReference type="HOGENOM" id="CLU_636513_0_0_1"/>
<dbReference type="InParanoid" id="F7IW82"/>
<dbReference type="OMA" id="QDEANQC"/>
<dbReference type="Proteomes" id="UP000007062">
    <property type="component" value="Chromosome X"/>
</dbReference>
<dbReference type="GO" id="GO:0005576">
    <property type="term" value="C:extracellular region"/>
    <property type="evidence" value="ECO:0007669"/>
    <property type="project" value="UniProtKB-SubCell"/>
</dbReference>
<feature type="signal peptide" evidence="1">
    <location>
        <begin position="1"/>
        <end position="39"/>
    </location>
</feature>
<feature type="chain" id="PRO_5014571662" description="Saglin" evidence="1">
    <location>
        <begin position="40"/>
        <end position="431"/>
    </location>
</feature>
<feature type="coiled-coil region" evidence="1">
    <location>
        <begin position="120"/>
        <end position="169"/>
    </location>
</feature>
<feature type="glycosylation site" description="N-linked (GlcNAc...) asparagine" evidence="2">
    <location>
        <position position="95"/>
    </location>
</feature>
<feature type="sequence conflict" description="In Ref. 3; AAW31598." evidence="11" ref="3">
    <location>
        <begin position="1"/>
        <end position="19"/>
    </location>
</feature>
<protein>
    <recommendedName>
        <fullName evidence="8 9">Saglin</fullName>
    </recommendedName>
</protein>
<sequence length="431" mass="49251">MSVRGYSGVQVISSRKHRSMSRLPTVLLLLASAAVLAAGGQEATEDPFADETDQCQISVSAETMKSLHGGSMQPDGTCDNLWESFLSQFHQVRENLTACQERAAAGPAPDPSSQFCQQLLDDAQRQMEQEHRQYAATLEEQLHAAQQETQQEQEMKKALQKQLDALTDSRNALYIDLLLANIAIGETKQALSYYNLMPASMPIDKLHEQIVRFVYRVTIYQDQRLLNLMRFVRDIPSVEERRSLYQLAQREVQKRPSQRDGYVAAVYALSVREDLPVYQANRQLYDDLVRQSETRLKEQVANGNFKQAAELAARQPQHFRQLQTSLATIELKHWRKFDRFVPYANALPQPAQRLEVLRVLLSQIGDREKKTSHKYLVKAARQFDICEQFIGRGKVDQAVKKQLEELRGKFATFAKGKNYQHYLSESRKSSG</sequence>
<organism evidence="13">
    <name type="scientific">Anopheles gambiae</name>
    <name type="common">African malaria mosquito</name>
    <dbReference type="NCBI Taxonomy" id="7165"/>
    <lineage>
        <taxon>Eukaryota</taxon>
        <taxon>Metazoa</taxon>
        <taxon>Ecdysozoa</taxon>
        <taxon>Arthropoda</taxon>
        <taxon>Hexapoda</taxon>
        <taxon>Insecta</taxon>
        <taxon>Pterygota</taxon>
        <taxon>Neoptera</taxon>
        <taxon>Endopterygota</taxon>
        <taxon>Diptera</taxon>
        <taxon>Nematocera</taxon>
        <taxon>Culicoidea</taxon>
        <taxon>Culicidae</taxon>
        <taxon>Anophelinae</taxon>
        <taxon>Anopheles</taxon>
    </lineage>
</organism>
<accession>F7IW82</accession>
<accession>A0NCG3</accession>
<accession>Q2TLV8</accession>
<comment type="function">
    <text evidence="3">(Microbial infection) Facilitates invasion of mosquito salivary glands by Plasmodium yoelii sporozoites.</text>
</comment>
<comment type="function">
    <text evidence="5">(Microbial infection) Facilitates invasion of mosquito salivary glands by Plasmodium falciparum sporozoites.</text>
</comment>
<comment type="function">
    <text evidence="5">(Microbial infection) Probably facilitates invasion of mosquito salivary glands by Plasmodium berghei sporozoites.</text>
</comment>
<comment type="subunit">
    <text evidence="4">Homodimer; disulfide-linked.</text>
</comment>
<comment type="subunit">
    <text evidence="5">(Microbial infection) Interacts with Plasmodium berghei TRAP (via integrin-like A-domain); the interaction probably promotes sporozoite invasion of salivary gland.</text>
</comment>
<comment type="subcellular location">
    <subcellularLocation>
        <location evidence="4">Secreted</location>
    </subcellularLocation>
</comment>
<comment type="tissue specificity">
    <text evidence="3 4 5 6">Female saliva (at protein level) (PubMed:18093000). Female salivary gland (at protein level) (PubMed:11087838, PubMed:18093000, PubMed:19148273, PubMed:30602380).</text>
</comment>
<comment type="developmental stage">
    <text evidence="3">Not detected until day 6 after emergence (PubMed:11087838). Expressed at maximum levels on day 7 after emergence (PubMed:11087838).</text>
</comment>
<comment type="induction">
    <text evidence="3">Induced by blood feeding (at protein level).</text>
</comment>
<comment type="disruption phenotype">
    <text evidence="5">(Microbial infection) RNAi-mediated knockdown results in fewer Plasmodium falciparum sporozoites invading mosquito salivary gland.</text>
</comment>
<comment type="miscellaneous">
    <text evidence="3 5">Monoclonal antibodies against saglin/SG1f fed during blood meal inhibit Plasmodium yoelii sporozoite invasion of mosquito salivary glands (PubMed:11087838). Monoclonal antibodies against saglin/SG1f fed during blood meal inhibit Plasmodium falciparum sporozoite invasion of mosquito salivary glands (PubMed:19148273).</text>
</comment>
<evidence type="ECO:0000255" key="1"/>
<evidence type="ECO:0000255" key="2">
    <source>
        <dbReference type="PROSITE-ProRule" id="PRU00498"/>
    </source>
</evidence>
<evidence type="ECO:0000269" key="3">
    <source>
    </source>
</evidence>
<evidence type="ECO:0000269" key="4">
    <source>
    </source>
</evidence>
<evidence type="ECO:0000269" key="5">
    <source>
    </source>
</evidence>
<evidence type="ECO:0000269" key="6">
    <source>
    </source>
</evidence>
<evidence type="ECO:0000303" key="7">
    <source>
    </source>
</evidence>
<evidence type="ECO:0000303" key="8">
    <source>
    </source>
</evidence>
<evidence type="ECO:0000303" key="9">
    <source>
    </source>
</evidence>
<evidence type="ECO:0000303" key="10">
    <source>
    </source>
</evidence>
<evidence type="ECO:0000305" key="11"/>
<evidence type="ECO:0000312" key="12">
    <source>
        <dbReference type="EMBL" id="AAW31598.1"/>
    </source>
</evidence>
<evidence type="ECO:0000312" key="13">
    <source>
        <dbReference type="EMBL" id="EAU77228.3"/>
    </source>
</evidence>
<evidence type="ECO:0000312" key="14">
    <source>
        <dbReference type="Proteomes" id="UP000007062"/>
    </source>
</evidence>
<reference evidence="14" key="1">
    <citation type="journal article" date="2002" name="Science">
        <title>The genome sequence of the malaria mosquito Anopheles gambiae.</title>
        <authorList>
            <person name="Holt R.A."/>
            <person name="Subramanian G.M."/>
            <person name="Halpern A."/>
            <person name="Sutton G.G."/>
            <person name="Charlab R."/>
            <person name="Nusskern D.R."/>
            <person name="Wincker P."/>
            <person name="Clark A.G."/>
            <person name="Ribeiro J.M.C."/>
            <person name="Wides R."/>
            <person name="Salzberg S.L."/>
            <person name="Loftus B.J."/>
            <person name="Yandell M.D."/>
            <person name="Majoros W.H."/>
            <person name="Rusch D.B."/>
            <person name="Lai Z."/>
            <person name="Kraft C.L."/>
            <person name="Abril J.F."/>
            <person name="Anthouard V."/>
            <person name="Arensburger P."/>
            <person name="Atkinson P.W."/>
            <person name="Baden H."/>
            <person name="de Berardinis V."/>
            <person name="Baldwin D."/>
            <person name="Benes V."/>
            <person name="Biedler J."/>
            <person name="Blass C."/>
            <person name="Bolanos R."/>
            <person name="Boscus D."/>
            <person name="Barnstead M."/>
            <person name="Cai S."/>
            <person name="Center A."/>
            <person name="Chaturverdi K."/>
            <person name="Christophides G.K."/>
            <person name="Chrystal M.A.M."/>
            <person name="Clamp M."/>
            <person name="Cravchik A."/>
            <person name="Curwen V."/>
            <person name="Dana A."/>
            <person name="Delcher A."/>
            <person name="Dew I."/>
            <person name="Evans C.A."/>
            <person name="Flanigan M."/>
            <person name="Grundschober-Freimoser A."/>
            <person name="Friedli L."/>
            <person name="Gu Z."/>
            <person name="Guan P."/>
            <person name="Guigo R."/>
            <person name="Hillenmeyer M.E."/>
            <person name="Hladun S.L."/>
            <person name="Hogan J.R."/>
            <person name="Hong Y.S."/>
            <person name="Hoover J."/>
            <person name="Jaillon O."/>
            <person name="Ke Z."/>
            <person name="Kodira C.D."/>
            <person name="Kokoza E."/>
            <person name="Koutsos A."/>
            <person name="Letunic I."/>
            <person name="Levitsky A.A."/>
            <person name="Liang Y."/>
            <person name="Lin J.-J."/>
            <person name="Lobo N.F."/>
            <person name="Lopez J.R."/>
            <person name="Malek J.A."/>
            <person name="McIntosh T.C."/>
            <person name="Meister S."/>
            <person name="Miller J.R."/>
            <person name="Mobarry C."/>
            <person name="Mongin E."/>
            <person name="Murphy S.D."/>
            <person name="O'Brochta D.A."/>
            <person name="Pfannkoch C."/>
            <person name="Qi R."/>
            <person name="Regier M.A."/>
            <person name="Remington K."/>
            <person name="Shao H."/>
            <person name="Sharakhova M.V."/>
            <person name="Sitter C.D."/>
            <person name="Shetty J."/>
            <person name="Smith T.J."/>
            <person name="Strong R."/>
            <person name="Sun J."/>
            <person name="Thomasova D."/>
            <person name="Ton L.Q."/>
            <person name="Topalis P."/>
            <person name="Tu Z.J."/>
            <person name="Unger M.F."/>
            <person name="Walenz B."/>
            <person name="Wang A.H."/>
            <person name="Wang J."/>
            <person name="Wang M."/>
            <person name="Wang X."/>
            <person name="Woodford K.J."/>
            <person name="Wortman J.R."/>
            <person name="Wu M."/>
            <person name="Yao A."/>
            <person name="Zdobnov E.M."/>
            <person name="Zhang H."/>
            <person name="Zhao Q."/>
            <person name="Zhao S."/>
            <person name="Zhu S.C."/>
            <person name="Zhimulev I."/>
            <person name="Coluzzi M."/>
            <person name="della Torre A."/>
            <person name="Roth C.W."/>
            <person name="Louis C."/>
            <person name="Kalush F."/>
            <person name="Mural R.J."/>
            <person name="Myers E.W."/>
            <person name="Adams M.D."/>
            <person name="Smith H.O."/>
            <person name="Broder S."/>
            <person name="Gardner M.J."/>
            <person name="Fraser C.M."/>
            <person name="Birney E."/>
            <person name="Bork P."/>
            <person name="Brey P.T."/>
            <person name="Venter J.C."/>
            <person name="Weissenbach J."/>
            <person name="Kafatos F.C."/>
            <person name="Collins F.H."/>
            <person name="Hoffman S.L."/>
        </authorList>
    </citation>
    <scope>NUCLEOTIDE SEQUENCE [LARGE SCALE GENOMIC DNA]</scope>
    <source>
        <strain evidence="14">PEST</strain>
    </source>
</reference>
<reference evidence="13" key="2">
    <citation type="journal article" date="2007" name="Genome Biol.">
        <title>Update of the Anopheles gambiae PEST genome assembly.</title>
        <authorList>
            <person name="Sharakhova M.V."/>
            <person name="Hammond M.P."/>
            <person name="Lobo N.F."/>
            <person name="Krzywinski J."/>
            <person name="Unger M.F."/>
            <person name="Hillenmeyer M.E."/>
            <person name="Bruggner R.V."/>
            <person name="Birney E."/>
            <person name="Collins F.H."/>
        </authorList>
    </citation>
    <scope>NUCLEOTIDE SEQUENCE [LARGE SCALE GENOMIC DNA]</scope>
    <source>
        <strain evidence="13">PEST</strain>
    </source>
</reference>
<reference evidence="12" key="3">
    <citation type="submission" date="2004-12" db="EMBL/GenBank/DDBJ databases">
        <title>Identification of a novel protein, SAGLIN, as a putative receptor for sporozoite in the salivary gland of Anopheles gambiae.</title>
        <authorList>
            <person name="Okulate M."/>
            <person name="Kalume D.E."/>
            <person name="Kristiansen T."/>
            <person name="Bhattacharyya M."/>
            <person name="Pandey A."/>
            <person name="Kumar N."/>
        </authorList>
    </citation>
    <scope>NUCLEOTIDE SEQUENCE [GENOMIC DNA]</scope>
    <source>
        <strain evidence="12">G3</strain>
    </source>
</reference>
<reference evidence="11" key="4">
    <citation type="journal article" date="2000" name="Proc. Natl. Acad. Sci. U.S.A.">
        <title>Anopheles gambiae salivary gland proteins as putative targets for blocking transmission of malaria parasites.</title>
        <authorList>
            <person name="Brennan J.D."/>
            <person name="Kent M."/>
            <person name="Dhar R."/>
            <person name="Fujioka H."/>
            <person name="Kumar N."/>
        </authorList>
    </citation>
    <scope>FUNCTION (MICROBIAL INFECTION)</scope>
    <scope>TISSUE SPECIFICITY</scope>
    <scope>DEVELOPMENTAL STAGE</scope>
    <scope>INDUCTION BY BLOOD FEEDING</scope>
    <source>
        <strain evidence="7">G3</strain>
    </source>
</reference>
<reference evidence="11" key="5">
    <citation type="journal article" date="2007" name="Insect Mol. Biol.">
        <title>Identification and molecular characterization of a novel protein Saglin as a target of monoclonal antibodies affecting salivary gland infectivity of Plasmodium sporozoites.</title>
        <authorList>
            <person name="Okulate M.A."/>
            <person name="Kalume D.E."/>
            <person name="Reddy R."/>
            <person name="Kristiansen T."/>
            <person name="Bhattacharyya M."/>
            <person name="Chaerkady R."/>
            <person name="Pandey A."/>
            <person name="Kumar N."/>
        </authorList>
    </citation>
    <scope>IDENTIFICATION BY MASS SPECTROMETRY</scope>
    <scope>SUBUNIT</scope>
    <scope>SUBCELLULAR LOCATION</scope>
    <scope>TISSUE SPECIFICITY</scope>
    <source>
        <strain evidence="8">G3</strain>
    </source>
</reference>
<reference evidence="11" key="6">
    <citation type="journal article" date="2009" name="PLoS Pathog.">
        <title>Malaria parasite invasion of the mosquito salivary gland requires interaction between the Plasmodium TRAP and the Anopheles saglin proteins.</title>
        <authorList>
            <person name="Ghosh A.K."/>
            <person name="Devenport M."/>
            <person name="Jethwaney D."/>
            <person name="Kalume D.E."/>
            <person name="Pandey A."/>
            <person name="Anderson V.E."/>
            <person name="Sultan A.A."/>
            <person name="Kumar N."/>
            <person name="Jacobs-Lorena M."/>
        </authorList>
    </citation>
    <scope>IDENTIFICATION BY MASS SPECTROMETRY</scope>
    <scope>FUNCTION (MICROBIAL INFECTION)</scope>
    <scope>INTERACTION WITH PLASMODIUM TRAP (MICROBIAL INFECTION)</scope>
    <scope>TISSUE SPECIFICITY</scope>
    <scope>DISRUPTION PHENOTYPE (MICROBIAL INFECTION)</scope>
    <source>
        <strain evidence="9">G3</strain>
    </source>
</reference>
<reference evidence="11" key="7">
    <citation type="journal article" date="2019" name="Malar. J.">
        <title>Is Saglin a mosquito salivary gland receptor for Plasmodium falciparum?</title>
        <authorList>
            <person name="O'Brochta D.A."/>
            <person name="Alford R."/>
            <person name="Harrell R."/>
            <person name="Aluvihare C."/>
            <person name="Eappen A.G."/>
            <person name="Li T."/>
            <person name="Chakravarty S."/>
            <person name="Sim B.K.L."/>
            <person name="Hoffman S.L."/>
            <person name="Billingsley P.F."/>
        </authorList>
    </citation>
    <scope>TISSUE SPECIFICITY</scope>
    <source>
        <strain evidence="10">G3</strain>
    </source>
</reference>
<name>SGLN_ANOGA</name>